<sequence>MLTPFNNFFQQRQNYHSSVIDHFENPRNVGSYDKSANDVGTGLVGAPACGDVMKLQIKVENDIIKDAKFRTFGCGSAIASSSLATEWIKGKSISDSLKITNKDIAKKLSLPPVKLHCSMLAEDAIKAAISDYQKKNGL</sequence>
<dbReference type="EMBL" id="EF571314">
    <property type="protein sequence ID" value="ABS58598.1"/>
    <property type="molecule type" value="Genomic_DNA"/>
</dbReference>
<dbReference type="EMBL" id="JH994054">
    <property type="protein sequence ID" value="ELQ74294.1"/>
    <property type="molecule type" value="Genomic_DNA"/>
</dbReference>
<dbReference type="SMR" id="B0YLW7"/>
<dbReference type="FunCoup" id="B0YLW7">
    <property type="interactions" value="36"/>
</dbReference>
<dbReference type="STRING" id="72359.B0YLW7"/>
<dbReference type="VEuPathDB" id="MicrosporidiaDB:THOM_2800"/>
<dbReference type="HOGENOM" id="CLU_079283_5_0_1"/>
<dbReference type="InParanoid" id="B0YLW7"/>
<dbReference type="OMA" id="SMVTEMV"/>
<dbReference type="OrthoDB" id="1925777at2759"/>
<dbReference type="UniPathway" id="UPA00266"/>
<dbReference type="Proteomes" id="UP000011185">
    <property type="component" value="Unassembled WGS sequence"/>
</dbReference>
<dbReference type="GO" id="GO:0005737">
    <property type="term" value="C:cytoplasm"/>
    <property type="evidence" value="ECO:0007669"/>
    <property type="project" value="UniProtKB-SubCell"/>
</dbReference>
<dbReference type="GO" id="GO:0051537">
    <property type="term" value="F:2 iron, 2 sulfur cluster binding"/>
    <property type="evidence" value="ECO:0007669"/>
    <property type="project" value="UniProtKB-KW"/>
</dbReference>
<dbReference type="GO" id="GO:0005506">
    <property type="term" value="F:iron ion binding"/>
    <property type="evidence" value="ECO:0007669"/>
    <property type="project" value="InterPro"/>
</dbReference>
<dbReference type="GO" id="GO:0016226">
    <property type="term" value="P:iron-sulfur cluster assembly"/>
    <property type="evidence" value="ECO:0007669"/>
    <property type="project" value="InterPro"/>
</dbReference>
<dbReference type="CDD" id="cd06664">
    <property type="entry name" value="IscU_like"/>
    <property type="match status" value="1"/>
</dbReference>
<dbReference type="FunFam" id="3.90.1010.10:FF:000005">
    <property type="entry name" value="Iron-sulfur cluster assembly protein"/>
    <property type="match status" value="1"/>
</dbReference>
<dbReference type="Gene3D" id="3.90.1010.10">
    <property type="match status" value="1"/>
</dbReference>
<dbReference type="InterPro" id="IPR011339">
    <property type="entry name" value="ISCU"/>
</dbReference>
<dbReference type="InterPro" id="IPR002871">
    <property type="entry name" value="NIF_FeS_clus_asmbl_NifU_N"/>
</dbReference>
<dbReference type="NCBIfam" id="TIGR01999">
    <property type="entry name" value="iscU"/>
    <property type="match status" value="1"/>
</dbReference>
<dbReference type="PANTHER" id="PTHR10093">
    <property type="entry name" value="IRON-SULFUR CLUSTER ASSEMBLY ENZYME NIFU HOMOLOG"/>
    <property type="match status" value="1"/>
</dbReference>
<dbReference type="Pfam" id="PF01592">
    <property type="entry name" value="NifU_N"/>
    <property type="match status" value="1"/>
</dbReference>
<dbReference type="SUPFAM" id="SSF82649">
    <property type="entry name" value="SufE/NifU"/>
    <property type="match status" value="1"/>
</dbReference>
<accession>B0YLW7</accession>
<accession>L7JS96</accession>
<protein>
    <recommendedName>
        <fullName>Iron sulfur cluster assembly protein 1</fullName>
    </recommendedName>
    <alternativeName>
        <fullName>Iron sulfur cluster scaffold protein 1</fullName>
    </alternativeName>
</protein>
<gene>
    <name type="primary">ISU1</name>
    <name type="ORF">THOM_2800</name>
</gene>
<comment type="function">
    <text evidence="1 3">Scaffold protein for the de novo synthesis of iron-sulfur (Fe-S) clusters within mitosomes, which is required for maturation of both [2Fe-2S] and [4Fe-4S] proteins (PubMed:18311129). First, a [2Fe-2S] cluster is transiently assembled on the scaffold protein ISU1. In a second step, the cluster is released from ISU1, transferred to a glutaredoxin, followed by the formation of [2Fe-2S] proteins, the synthesis of [4Fe-4S] clusters and their target-specific insertion into the recipient apoproteins. Cluster assembly on ISU1 depends on the function of the cysteine desulfurase complex NFS1-ISD11, which serves as the sulfur donor for cluster synthesis, the iron-binding protein frataxin as the putative iron donor, and the electron transfer chain comprised of ferredoxin reductase and ferredoxin, which receive their electrons from NADH (By similarity).</text>
</comment>
<comment type="cofactor">
    <cofactor evidence="2">
        <name>[2Fe-2S] cluster</name>
        <dbReference type="ChEBI" id="CHEBI:190135"/>
    </cofactor>
    <text evidence="2">Binds 1 [2Fe-2S] cluster per subunit.</text>
</comment>
<comment type="pathway">
    <text evidence="1">Cofactor biosynthesis; iron-sulfur cluster biosynthesis.</text>
</comment>
<comment type="subunit">
    <text evidence="1">Component of the core Fe-S cluster (ISC) assembly machinery.</text>
</comment>
<comment type="subcellular location">
    <subcellularLocation>
        <location evidence="3">Cytoplasm</location>
    </subcellularLocation>
    <text evidence="5">It is unknown how the different localizations of several ISC components to mitosomes and cytoplasm can be reconciled with the usually tightly coordinated function of these components.</text>
</comment>
<comment type="similarity">
    <text evidence="4">Belongs to the NifU family.</text>
</comment>
<feature type="chain" id="PRO_0000382933" description="Iron sulfur cluster assembly protein 1">
    <location>
        <begin position="1"/>
        <end position="138"/>
    </location>
</feature>
<evidence type="ECO:0000250" key="1">
    <source>
        <dbReference type="UniProtKB" id="Q03020"/>
    </source>
</evidence>
<evidence type="ECO:0000250" key="2">
    <source>
        <dbReference type="UniProtKB" id="Q9UTC6"/>
    </source>
</evidence>
<evidence type="ECO:0000269" key="3">
    <source>
    </source>
</evidence>
<evidence type="ECO:0000305" key="4"/>
<evidence type="ECO:0000305" key="5">
    <source>
    </source>
</evidence>
<name>ISU1_TRAHO</name>
<reference key="1">
    <citation type="journal article" date="2008" name="Nature">
        <title>Localization and functionality of microsporidian iron-sulphur cluster assembly proteins.</title>
        <authorList>
            <person name="Goldberg A.V."/>
            <person name="Molik S."/>
            <person name="Tsaousis A.D."/>
            <person name="Neumann K."/>
            <person name="Kuhnke G."/>
            <person name="Delbac F."/>
            <person name="Vivares C.P."/>
            <person name="Hirt R.P."/>
            <person name="Lill R."/>
            <person name="Embley T.M."/>
        </authorList>
    </citation>
    <scope>NUCLEOTIDE SEQUENCE [GENOMIC DNA]</scope>
    <scope>SUBCELLULAR LOCATION</scope>
    <scope>FUNCTION</scope>
</reference>
<reference key="2">
    <citation type="journal article" date="2012" name="PLoS Pathog.">
        <title>The genome of the obligate intracellular parasite Trachipleistophora hominis: new insights into microsporidian genome dynamics and reductive evolution.</title>
        <authorList>
            <person name="Heinz E."/>
            <person name="Williams T.A."/>
            <person name="Nakjang S."/>
            <person name="Noel C.J."/>
            <person name="Swan D.C."/>
            <person name="Goldberg A.V."/>
            <person name="Harris S.R."/>
            <person name="Weinmaier T."/>
            <person name="Markert S."/>
            <person name="Becher D."/>
            <person name="Bernhardt J."/>
            <person name="Dagan T."/>
            <person name="Hacker C."/>
            <person name="Lucocq J.M."/>
            <person name="Schweder T."/>
            <person name="Rattei T."/>
            <person name="Hall N."/>
            <person name="Hirt R.P."/>
            <person name="Embley T.M."/>
        </authorList>
    </citation>
    <scope>NUCLEOTIDE SEQUENCE [LARGE SCALE GENOMIC DNA]</scope>
</reference>
<organism>
    <name type="scientific">Trachipleistophora hominis</name>
    <name type="common">Microsporidian parasite</name>
    <dbReference type="NCBI Taxonomy" id="72359"/>
    <lineage>
        <taxon>Eukaryota</taxon>
        <taxon>Fungi</taxon>
        <taxon>Fungi incertae sedis</taxon>
        <taxon>Microsporidia</taxon>
        <taxon>Pleistophoridae</taxon>
        <taxon>Trachipleistophora</taxon>
    </lineage>
</organism>
<keyword id="KW-0001">2Fe-2S</keyword>
<keyword id="KW-0963">Cytoplasm</keyword>
<keyword id="KW-0408">Iron</keyword>
<keyword id="KW-0411">Iron-sulfur</keyword>
<keyword id="KW-0479">Metal-binding</keyword>
<keyword id="KW-1185">Reference proteome</keyword>
<proteinExistence type="inferred from homology"/>